<dbReference type="EMBL" id="AY005144">
    <property type="protein sequence ID" value="AAF89095.1"/>
    <property type="molecule type" value="mRNA"/>
</dbReference>
<dbReference type="EMBL" id="AK024048">
    <property type="protein sequence ID" value="BAB14798.1"/>
    <property type="molecule type" value="mRNA"/>
</dbReference>
<dbReference type="EMBL" id="AC027104">
    <property type="status" value="NOT_ANNOTATED_CDS"/>
    <property type="molecule type" value="Genomic_DNA"/>
</dbReference>
<dbReference type="EMBL" id="BC032540">
    <property type="protein sequence ID" value="AAH32540.1"/>
    <property type="molecule type" value="mRNA"/>
</dbReference>
<dbReference type="EMBL" id="BC020204">
    <property type="protein sequence ID" value="AAH20204.2"/>
    <property type="molecule type" value="mRNA"/>
</dbReference>
<dbReference type="EMBL" id="BC039024">
    <property type="protein sequence ID" value="AAH39024.1"/>
    <property type="status" value="ALT_SEQ"/>
    <property type="molecule type" value="mRNA"/>
</dbReference>
<dbReference type="EMBL" id="BC041691">
    <property type="protein sequence ID" value="AAH41691.1"/>
    <property type="molecule type" value="mRNA"/>
</dbReference>
<dbReference type="EMBL" id="AF174602">
    <property type="protein sequence ID" value="AAF04523.1"/>
    <property type="molecule type" value="Genomic_DNA"/>
</dbReference>
<dbReference type="CCDS" id="CCDS10287.1">
    <molecule id="Q8NEZ5-1"/>
</dbReference>
<dbReference type="CCDS" id="CCDS45310.1">
    <molecule id="Q8NEZ5-3"/>
</dbReference>
<dbReference type="RefSeq" id="NP_036302.1">
    <molecule id="Q8NEZ5-3"/>
    <property type="nucleotide sequence ID" value="NM_012170.4"/>
</dbReference>
<dbReference type="RefSeq" id="NP_671717.1">
    <molecule id="Q8NEZ5-1"/>
    <property type="nucleotide sequence ID" value="NM_147188.3"/>
</dbReference>
<dbReference type="RefSeq" id="XP_011519749.1">
    <property type="nucleotide sequence ID" value="XM_011521447.2"/>
</dbReference>
<dbReference type="PDB" id="8S7D">
    <property type="method" value="EM"/>
    <property type="resolution" value="3.20 A"/>
    <property type="chains" value="D=12-403"/>
</dbReference>
<dbReference type="PDB" id="8S7E">
    <property type="method" value="EM"/>
    <property type="resolution" value="3.40 A"/>
    <property type="chains" value="B=12-403"/>
</dbReference>
<dbReference type="PDB" id="8UA3">
    <property type="method" value="EM"/>
    <property type="resolution" value="3.80 A"/>
    <property type="chains" value="C=1-403"/>
</dbReference>
<dbReference type="PDB" id="8UA6">
    <property type="method" value="EM"/>
    <property type="resolution" value="3.90 A"/>
    <property type="chains" value="C=1-403"/>
</dbReference>
<dbReference type="PDBsum" id="8S7D"/>
<dbReference type="PDBsum" id="8S7E"/>
<dbReference type="PDBsum" id="8UA3"/>
<dbReference type="PDBsum" id="8UA6"/>
<dbReference type="EMDB" id="EMD-19766"/>
<dbReference type="EMDB" id="EMD-19768"/>
<dbReference type="EMDB" id="EMD-42049"/>
<dbReference type="EMDB" id="EMD-42051"/>
<dbReference type="SMR" id="Q8NEZ5"/>
<dbReference type="BioGRID" id="117649">
    <property type="interactions" value="547"/>
</dbReference>
<dbReference type="ComplexPortal" id="CPX-7962">
    <property type="entry name" value="SCF E3 ubiquitin ligase complex, FBXO22 variant"/>
</dbReference>
<dbReference type="FunCoup" id="Q8NEZ5">
    <property type="interactions" value="1392"/>
</dbReference>
<dbReference type="IntAct" id="Q8NEZ5">
    <property type="interactions" value="23"/>
</dbReference>
<dbReference type="MINT" id="Q8NEZ5"/>
<dbReference type="STRING" id="9606.ENSP00000307833"/>
<dbReference type="GlyGen" id="Q8NEZ5">
    <property type="glycosylation" value="1 site, 1 O-linked glycan (1 site)"/>
</dbReference>
<dbReference type="iPTMnet" id="Q8NEZ5"/>
<dbReference type="MetOSite" id="Q8NEZ5"/>
<dbReference type="PhosphoSitePlus" id="Q8NEZ5"/>
<dbReference type="BioMuta" id="FBXO22"/>
<dbReference type="DMDM" id="30580428"/>
<dbReference type="jPOST" id="Q8NEZ5"/>
<dbReference type="MassIVE" id="Q8NEZ5"/>
<dbReference type="PaxDb" id="9606-ENSP00000307833"/>
<dbReference type="PeptideAtlas" id="Q8NEZ5"/>
<dbReference type="ProteomicsDB" id="73255">
    <molecule id="Q8NEZ5-1"/>
</dbReference>
<dbReference type="ProteomicsDB" id="73256">
    <molecule id="Q8NEZ5-2"/>
</dbReference>
<dbReference type="ProteomicsDB" id="73257">
    <molecule id="Q8NEZ5-3"/>
</dbReference>
<dbReference type="Pumba" id="Q8NEZ5"/>
<dbReference type="Antibodypedia" id="27397">
    <property type="antibodies" value="183 antibodies from 25 providers"/>
</dbReference>
<dbReference type="DNASU" id="26263"/>
<dbReference type="Ensembl" id="ENST00000308275.8">
    <molecule id="Q8NEZ5-1"/>
    <property type="protein sequence ID" value="ENSP00000307833.3"/>
    <property type="gene ID" value="ENSG00000167196.14"/>
</dbReference>
<dbReference type="Ensembl" id="ENST00000453211.6">
    <molecule id="Q8NEZ5-3"/>
    <property type="protein sequence ID" value="ENSP00000396442.2"/>
    <property type="gene ID" value="ENSG00000167196.14"/>
</dbReference>
<dbReference type="Ensembl" id="ENST00000569022.1">
    <molecule id="Q8NEZ5-2"/>
    <property type="protein sequence ID" value="ENSP00000457531.1"/>
    <property type="gene ID" value="ENSG00000167196.14"/>
</dbReference>
<dbReference type="GeneID" id="26263"/>
<dbReference type="KEGG" id="hsa:26263"/>
<dbReference type="MANE-Select" id="ENST00000308275.8">
    <property type="protein sequence ID" value="ENSP00000307833.3"/>
    <property type="RefSeq nucleotide sequence ID" value="NM_147188.3"/>
    <property type="RefSeq protein sequence ID" value="NP_671717.1"/>
</dbReference>
<dbReference type="UCSC" id="uc002bbj.3">
    <molecule id="Q8NEZ5-1"/>
    <property type="organism name" value="human"/>
</dbReference>
<dbReference type="AGR" id="HGNC:13593"/>
<dbReference type="CTD" id="26263"/>
<dbReference type="DisGeNET" id="26263"/>
<dbReference type="GeneCards" id="FBXO22"/>
<dbReference type="HGNC" id="HGNC:13593">
    <property type="gene designation" value="FBXO22"/>
</dbReference>
<dbReference type="HPA" id="ENSG00000167196">
    <property type="expression patterns" value="Low tissue specificity"/>
</dbReference>
<dbReference type="MIM" id="609096">
    <property type="type" value="gene"/>
</dbReference>
<dbReference type="neXtProt" id="NX_Q8NEZ5"/>
<dbReference type="OpenTargets" id="ENSG00000167196"/>
<dbReference type="PharmGKB" id="PA28035"/>
<dbReference type="VEuPathDB" id="HostDB:ENSG00000167196"/>
<dbReference type="eggNOG" id="ENOG502QSZ2">
    <property type="taxonomic scope" value="Eukaryota"/>
</dbReference>
<dbReference type="GeneTree" id="ENSGT00390000013049"/>
<dbReference type="HOGENOM" id="CLU_042854_0_0_1"/>
<dbReference type="InParanoid" id="Q8NEZ5"/>
<dbReference type="OMA" id="LWRECSR"/>
<dbReference type="OrthoDB" id="509497at2759"/>
<dbReference type="PAN-GO" id="Q8NEZ5">
    <property type="GO annotations" value="3 GO annotations based on evolutionary models"/>
</dbReference>
<dbReference type="PhylomeDB" id="Q8NEZ5"/>
<dbReference type="TreeFam" id="TF328809"/>
<dbReference type="PathwayCommons" id="Q8NEZ5"/>
<dbReference type="Reactome" id="R-HSA-8951664">
    <property type="pathway name" value="Neddylation"/>
</dbReference>
<dbReference type="Reactome" id="R-HSA-983168">
    <property type="pathway name" value="Antigen processing: Ubiquitination &amp; Proteasome degradation"/>
</dbReference>
<dbReference type="SignaLink" id="Q8NEZ5"/>
<dbReference type="SIGNOR" id="Q8NEZ5"/>
<dbReference type="BioGRID-ORCS" id="26263">
    <property type="hits" value="22 hits in 1203 CRISPR screens"/>
</dbReference>
<dbReference type="ChiTaRS" id="FBXO22">
    <property type="organism name" value="human"/>
</dbReference>
<dbReference type="GenomeRNAi" id="26263"/>
<dbReference type="Pharos" id="Q8NEZ5">
    <property type="development level" value="Tbio"/>
</dbReference>
<dbReference type="PRO" id="PR:Q8NEZ5"/>
<dbReference type="Proteomes" id="UP000005640">
    <property type="component" value="Chromosome 15"/>
</dbReference>
<dbReference type="RNAct" id="Q8NEZ5">
    <property type="molecule type" value="protein"/>
</dbReference>
<dbReference type="Bgee" id="ENSG00000167196">
    <property type="expression patterns" value="Expressed in endothelial cell and 178 other cell types or tissues"/>
</dbReference>
<dbReference type="ExpressionAtlas" id="Q8NEZ5">
    <property type="expression patterns" value="baseline and differential"/>
</dbReference>
<dbReference type="GO" id="GO:0005829">
    <property type="term" value="C:cytosol"/>
    <property type="evidence" value="ECO:0000304"/>
    <property type="project" value="Reactome"/>
</dbReference>
<dbReference type="GO" id="GO:0005634">
    <property type="term" value="C:nucleus"/>
    <property type="evidence" value="ECO:0007669"/>
    <property type="project" value="UniProtKB-SubCell"/>
</dbReference>
<dbReference type="GO" id="GO:0030018">
    <property type="term" value="C:Z disc"/>
    <property type="evidence" value="ECO:0007669"/>
    <property type="project" value="UniProtKB-SubCell"/>
</dbReference>
<dbReference type="GO" id="GO:0004842">
    <property type="term" value="F:ubiquitin-protein transferase activity"/>
    <property type="evidence" value="ECO:0000304"/>
    <property type="project" value="ProtInc"/>
</dbReference>
<dbReference type="GO" id="GO:0009267">
    <property type="term" value="P:cellular response to starvation"/>
    <property type="evidence" value="ECO:0007669"/>
    <property type="project" value="Ensembl"/>
</dbReference>
<dbReference type="GO" id="GO:0006913">
    <property type="term" value="P:nucleocytoplasmic transport"/>
    <property type="evidence" value="ECO:0007669"/>
    <property type="project" value="Ensembl"/>
</dbReference>
<dbReference type="GO" id="GO:0032436">
    <property type="term" value="P:positive regulation of proteasomal ubiquitin-dependent protein catabolic process"/>
    <property type="evidence" value="ECO:0000318"/>
    <property type="project" value="GO_Central"/>
</dbReference>
<dbReference type="GO" id="GO:0043161">
    <property type="term" value="P:proteasome-mediated ubiquitin-dependent protein catabolic process"/>
    <property type="evidence" value="ECO:0007669"/>
    <property type="project" value="Ensembl"/>
</dbReference>
<dbReference type="GO" id="GO:0036211">
    <property type="term" value="P:protein modification process"/>
    <property type="evidence" value="ECO:0000304"/>
    <property type="project" value="ProtInc"/>
</dbReference>
<dbReference type="GO" id="GO:0000209">
    <property type="term" value="P:protein polyubiquitination"/>
    <property type="evidence" value="ECO:0000318"/>
    <property type="project" value="GO_Central"/>
</dbReference>
<dbReference type="GO" id="GO:0048742">
    <property type="term" value="P:regulation of skeletal muscle fiber development"/>
    <property type="evidence" value="ECO:0000318"/>
    <property type="project" value="GO_Central"/>
</dbReference>
<dbReference type="GO" id="GO:0006511">
    <property type="term" value="P:ubiquitin-dependent protein catabolic process"/>
    <property type="evidence" value="ECO:0000304"/>
    <property type="project" value="ProtInc"/>
</dbReference>
<dbReference type="CDD" id="cd22097">
    <property type="entry name" value="F-box_FBXO22"/>
    <property type="match status" value="1"/>
</dbReference>
<dbReference type="Gene3D" id="1.20.1280.50">
    <property type="match status" value="1"/>
</dbReference>
<dbReference type="InterPro" id="IPR036047">
    <property type="entry name" value="F-box-like_dom_sf"/>
</dbReference>
<dbReference type="InterPro" id="IPR001810">
    <property type="entry name" value="F-box_dom"/>
</dbReference>
<dbReference type="InterPro" id="IPR019494">
    <property type="entry name" value="FIST_C"/>
</dbReference>
<dbReference type="PANTHER" id="PTHR14939">
    <property type="entry name" value="F-BOX ONLY PROTEIN 22"/>
    <property type="match status" value="1"/>
</dbReference>
<dbReference type="PANTHER" id="PTHR14939:SF5">
    <property type="entry name" value="F-BOX ONLY PROTEIN 22"/>
    <property type="match status" value="1"/>
</dbReference>
<dbReference type="Pfam" id="PF00646">
    <property type="entry name" value="F-box"/>
    <property type="match status" value="1"/>
</dbReference>
<dbReference type="Pfam" id="PF10442">
    <property type="entry name" value="FIST_C"/>
    <property type="match status" value="1"/>
</dbReference>
<dbReference type="SMART" id="SM01204">
    <property type="entry name" value="FIST_C"/>
    <property type="match status" value="1"/>
</dbReference>
<dbReference type="SUPFAM" id="SSF81383">
    <property type="entry name" value="F-box domain"/>
    <property type="match status" value="1"/>
</dbReference>
<name>FBX22_HUMAN</name>
<gene>
    <name type="primary">FBXO22</name>
    <name type="synonym">FBX22</name>
</gene>
<protein>
    <recommendedName>
        <fullName>F-box only protein 22</fullName>
    </recommendedName>
    <alternativeName>
        <fullName>F-box protein FBX22p44</fullName>
    </alternativeName>
</protein>
<evidence type="ECO:0000250" key="1"/>
<evidence type="ECO:0000269" key="2">
    <source>
    </source>
</evidence>
<evidence type="ECO:0000269" key="3">
    <source>
    </source>
</evidence>
<evidence type="ECO:0000269" key="4">
    <source>
    </source>
</evidence>
<evidence type="ECO:0000269" key="5">
    <source>
    </source>
</evidence>
<evidence type="ECO:0000269" key="6">
    <source>
    </source>
</evidence>
<evidence type="ECO:0000269" key="7">
    <source>
    </source>
</evidence>
<evidence type="ECO:0000303" key="8">
    <source>
    </source>
</evidence>
<evidence type="ECO:0000303" key="9">
    <source>
    </source>
</evidence>
<evidence type="ECO:0000305" key="10"/>
<evidence type="ECO:0007744" key="11">
    <source>
    </source>
</evidence>
<evidence type="ECO:0007744" key="12">
    <source>
    </source>
</evidence>
<evidence type="ECO:0007744" key="13">
    <source>
    </source>
</evidence>
<evidence type="ECO:0007744" key="14">
    <source>
    </source>
</evidence>
<evidence type="ECO:0007744" key="15">
    <source>
    </source>
</evidence>
<keyword id="KW-0002">3D-structure</keyword>
<keyword id="KW-0007">Acetylation</keyword>
<keyword id="KW-0025">Alternative splicing</keyword>
<keyword id="KW-0963">Cytoplasm</keyword>
<keyword id="KW-0539">Nucleus</keyword>
<keyword id="KW-0597">Phosphoprotein</keyword>
<keyword id="KW-1267">Proteomics identification</keyword>
<keyword id="KW-1185">Reference proteome</keyword>
<keyword id="KW-0833">Ubl conjugation pathway</keyword>
<comment type="function">
    <text evidence="2 3 4 5 6 7">Substrate-recognition component of the SCF (SKP1-CUL1-F-box protein)-type E3 ubiquitin ligase complex that is implicated in the control of various cellular processes such as cell cycle control, transcriptional regulation, DNA damage repair, and apoptosis. Promotes the proteasome-dependent degradation of key sarcomeric proteins, such as alpha-actinin (ACTN2) and filamin-C (FLNC), essential for maintenance of normal contractile function. Acts as a key regulator of histone methylation marks namely H3K9 and H3K36 methylation through the regulation of histone demethylase KDM4A protein levels (PubMed:21768309). In complex with KDM4A, also regulates the abundance of TP53 by targeting methylated TP53 for degradation at the late senescent stage (PubMed:26868148). Under oxidative stress, promotes the ubiquitination and degradation of BACH1. Mechanistically, reactive oxygen species (ROS) covalently modify cysteine residues on the bZIP domain of BACH1, leading to its release from chromatin and making it accessible to FBXO22 (PubMed:39504958). Upon amino acid depletion, mediates 'Lys-27'-linked ubiquitination of MTOR and thereby inhibits substrate recruitment to mTORC1 (PubMed:37979583). Also inhibits SARS-CoV-2 replication by inducing NSP5 degradation (PubMed:39223933).</text>
</comment>
<comment type="subunit">
    <text evidence="2 3">Directly interacts with SKP1 and CUL1 (PubMed:21768309, PubMed:22972877). Interacts (via C-terminal) with KDM4A (PubMed:21768309). Interacts with TP53 (PubMed:26868148). Interacts with MTOR; this interaction promotes 'lys-27'-linked ubiquitination of MTOR (PubMed:37979583).</text>
</comment>
<comment type="subunit">
    <text evidence="6">(Microbial infection) Interacts with SARS_COV-2 protein NSP5; this interaction attenuates NSP5-mediated inhibition of innate immunity.</text>
</comment>
<comment type="interaction">
    <interactant intactId="EBI-2510137">
        <id>Q8NEZ5</id>
    </interactant>
    <interactant intactId="EBI-359390">
        <id>Q13616</id>
        <label>CUL1</label>
    </interactant>
    <organismsDiffer>false</organismsDiffer>
    <experiments>4</experiments>
</comment>
<comment type="interaction">
    <interactant intactId="EBI-2510137">
        <id>Q8NEZ5</id>
    </interactant>
    <interactant intactId="EBI-307486">
        <id>P63208</id>
        <label>SKP1</label>
    </interactant>
    <organismsDiffer>false</organismsDiffer>
    <experiments>10</experiments>
</comment>
<comment type="subcellular location">
    <subcellularLocation>
        <location evidence="5 6">Cytoplasm</location>
    </subcellularLocation>
    <subcellularLocation>
        <location evidence="5 6">Nucleus</location>
    </subcellularLocation>
    <subcellularLocation>
        <location evidence="1">Cytoplasm</location>
        <location evidence="1">Myofibril</location>
        <location evidence="1">Sarcomere</location>
        <location evidence="1">Z line</location>
    </subcellularLocation>
    <text evidence="5">Amino acid depletion lead to a time-dependent increase of FBXO22 in the cytoplasm.</text>
</comment>
<comment type="alternative products">
    <event type="alternative splicing"/>
    <isoform>
        <id>Q8NEZ5-1</id>
        <name>1</name>
        <sequence type="displayed"/>
    </isoform>
    <isoform>
        <id>Q8NEZ5-2</id>
        <name>2</name>
        <sequence type="described" ref="VSP_041821"/>
    </isoform>
    <isoform>
        <id>Q8NEZ5-3</id>
        <name>3</name>
        <sequence type="described" ref="VSP_013058 VSP_013059"/>
    </isoform>
</comment>
<comment type="tissue specificity">
    <text evidence="3">Predominantly expressed in liver, also enriched in cardiac muscle.</text>
</comment>
<comment type="PTM">
    <text evidence="5">Phosphorylated by EIF2AK4 at Thr-127 causes cytoplasmic retention of FBXO22.</text>
</comment>
<comment type="miscellaneous">
    <molecule>Isoform 2</molecule>
    <text evidence="10">May be produced at very low levels due to a premature stop codon in the mRNA, leading to nonsense-mediated mRNA decay.</text>
</comment>
<comment type="sequence caution" evidence="10">
    <conflict type="erroneous translation">
        <sequence resource="EMBL-CDS" id="AAH39024"/>
    </conflict>
    <text>Wrong choice of CDS.</text>
</comment>
<accession>Q8NEZ5</accession>
<accession>Q0D2P8</accession>
<accession>Q6PIL5</accession>
<accession>Q8IXW3</accession>
<accession>Q9H824</accession>
<accession>Q9UKC0</accession>
<reference key="1">
    <citation type="submission" date="2000-07" db="EMBL/GenBank/DDBJ databases">
        <title>FBX22p44: a novel human F-box protein predominantly expressed in the liver.</title>
        <authorList>
            <person name="Tan P."/>
            <person name="Pan Z.-Q."/>
        </authorList>
    </citation>
    <scope>NUCLEOTIDE SEQUENCE [MRNA] (ISOFORM 1)</scope>
</reference>
<reference key="2">
    <citation type="journal article" date="2004" name="Nat. Genet.">
        <title>Complete sequencing and characterization of 21,243 full-length human cDNAs.</title>
        <authorList>
            <person name="Ota T."/>
            <person name="Suzuki Y."/>
            <person name="Nishikawa T."/>
            <person name="Otsuki T."/>
            <person name="Sugiyama T."/>
            <person name="Irie R."/>
            <person name="Wakamatsu A."/>
            <person name="Hayashi K."/>
            <person name="Sato H."/>
            <person name="Nagai K."/>
            <person name="Kimura K."/>
            <person name="Makita H."/>
            <person name="Sekine M."/>
            <person name="Obayashi M."/>
            <person name="Nishi T."/>
            <person name="Shibahara T."/>
            <person name="Tanaka T."/>
            <person name="Ishii S."/>
            <person name="Yamamoto J."/>
            <person name="Saito K."/>
            <person name="Kawai Y."/>
            <person name="Isono Y."/>
            <person name="Nakamura Y."/>
            <person name="Nagahari K."/>
            <person name="Murakami K."/>
            <person name="Yasuda T."/>
            <person name="Iwayanagi T."/>
            <person name="Wagatsuma M."/>
            <person name="Shiratori A."/>
            <person name="Sudo H."/>
            <person name="Hosoiri T."/>
            <person name="Kaku Y."/>
            <person name="Kodaira H."/>
            <person name="Kondo H."/>
            <person name="Sugawara M."/>
            <person name="Takahashi M."/>
            <person name="Kanda K."/>
            <person name="Yokoi T."/>
            <person name="Furuya T."/>
            <person name="Kikkawa E."/>
            <person name="Omura Y."/>
            <person name="Abe K."/>
            <person name="Kamihara K."/>
            <person name="Katsuta N."/>
            <person name="Sato K."/>
            <person name="Tanikawa M."/>
            <person name="Yamazaki M."/>
            <person name="Ninomiya K."/>
            <person name="Ishibashi T."/>
            <person name="Yamashita H."/>
            <person name="Murakawa K."/>
            <person name="Fujimori K."/>
            <person name="Tanai H."/>
            <person name="Kimata M."/>
            <person name="Watanabe M."/>
            <person name="Hiraoka S."/>
            <person name="Chiba Y."/>
            <person name="Ishida S."/>
            <person name="Ono Y."/>
            <person name="Takiguchi S."/>
            <person name="Watanabe S."/>
            <person name="Yosida M."/>
            <person name="Hotuta T."/>
            <person name="Kusano J."/>
            <person name="Kanehori K."/>
            <person name="Takahashi-Fujii A."/>
            <person name="Hara H."/>
            <person name="Tanase T.-O."/>
            <person name="Nomura Y."/>
            <person name="Togiya S."/>
            <person name="Komai F."/>
            <person name="Hara R."/>
            <person name="Takeuchi K."/>
            <person name="Arita M."/>
            <person name="Imose N."/>
            <person name="Musashino K."/>
            <person name="Yuuki H."/>
            <person name="Oshima A."/>
            <person name="Sasaki N."/>
            <person name="Aotsuka S."/>
            <person name="Yoshikawa Y."/>
            <person name="Matsunawa H."/>
            <person name="Ichihara T."/>
            <person name="Shiohata N."/>
            <person name="Sano S."/>
            <person name="Moriya S."/>
            <person name="Momiyama H."/>
            <person name="Satoh N."/>
            <person name="Takami S."/>
            <person name="Terashima Y."/>
            <person name="Suzuki O."/>
            <person name="Nakagawa S."/>
            <person name="Senoh A."/>
            <person name="Mizoguchi H."/>
            <person name="Goto Y."/>
            <person name="Shimizu F."/>
            <person name="Wakebe H."/>
            <person name="Hishigaki H."/>
            <person name="Watanabe T."/>
            <person name="Sugiyama A."/>
            <person name="Takemoto M."/>
            <person name="Kawakami B."/>
            <person name="Yamazaki M."/>
            <person name="Watanabe K."/>
            <person name="Kumagai A."/>
            <person name="Itakura S."/>
            <person name="Fukuzumi Y."/>
            <person name="Fujimori Y."/>
            <person name="Komiyama M."/>
            <person name="Tashiro H."/>
            <person name="Tanigami A."/>
            <person name="Fujiwara T."/>
            <person name="Ono T."/>
            <person name="Yamada K."/>
            <person name="Fujii Y."/>
            <person name="Ozaki K."/>
            <person name="Hirao M."/>
            <person name="Ohmori Y."/>
            <person name="Kawabata A."/>
            <person name="Hikiji T."/>
            <person name="Kobatake N."/>
            <person name="Inagaki H."/>
            <person name="Ikema Y."/>
            <person name="Okamoto S."/>
            <person name="Okitani R."/>
            <person name="Kawakami T."/>
            <person name="Noguchi S."/>
            <person name="Itoh T."/>
            <person name="Shigeta K."/>
            <person name="Senba T."/>
            <person name="Matsumura K."/>
            <person name="Nakajima Y."/>
            <person name="Mizuno T."/>
            <person name="Morinaga M."/>
            <person name="Sasaki M."/>
            <person name="Togashi T."/>
            <person name="Oyama M."/>
            <person name="Hata H."/>
            <person name="Watanabe M."/>
            <person name="Komatsu T."/>
            <person name="Mizushima-Sugano J."/>
            <person name="Satoh T."/>
            <person name="Shirai Y."/>
            <person name="Takahashi Y."/>
            <person name="Nakagawa K."/>
            <person name="Okumura K."/>
            <person name="Nagase T."/>
            <person name="Nomura N."/>
            <person name="Kikuchi H."/>
            <person name="Masuho Y."/>
            <person name="Yamashita R."/>
            <person name="Nakai K."/>
            <person name="Yada T."/>
            <person name="Nakamura Y."/>
            <person name="Ohara O."/>
            <person name="Isogai T."/>
            <person name="Sugano S."/>
        </authorList>
    </citation>
    <scope>NUCLEOTIDE SEQUENCE [LARGE SCALE MRNA] (ISOFORM 3)</scope>
</reference>
<reference key="3">
    <citation type="journal article" date="2006" name="Nature">
        <title>Analysis of the DNA sequence and duplication history of human chromosome 15.</title>
        <authorList>
            <person name="Zody M.C."/>
            <person name="Garber M."/>
            <person name="Sharpe T."/>
            <person name="Young S.K."/>
            <person name="Rowen L."/>
            <person name="O'Neill K."/>
            <person name="Whittaker C.A."/>
            <person name="Kamal M."/>
            <person name="Chang J.L."/>
            <person name="Cuomo C.A."/>
            <person name="Dewar K."/>
            <person name="FitzGerald M.G."/>
            <person name="Kodira C.D."/>
            <person name="Madan A."/>
            <person name="Qin S."/>
            <person name="Yang X."/>
            <person name="Abbasi N."/>
            <person name="Abouelleil A."/>
            <person name="Arachchi H.M."/>
            <person name="Baradarani L."/>
            <person name="Birditt B."/>
            <person name="Bloom S."/>
            <person name="Bloom T."/>
            <person name="Borowsky M.L."/>
            <person name="Burke J."/>
            <person name="Butler J."/>
            <person name="Cook A."/>
            <person name="DeArellano K."/>
            <person name="DeCaprio D."/>
            <person name="Dorris L. III"/>
            <person name="Dors M."/>
            <person name="Eichler E.E."/>
            <person name="Engels R."/>
            <person name="Fahey J."/>
            <person name="Fleetwood P."/>
            <person name="Friedman C."/>
            <person name="Gearin G."/>
            <person name="Hall J.L."/>
            <person name="Hensley G."/>
            <person name="Johnson E."/>
            <person name="Jones C."/>
            <person name="Kamat A."/>
            <person name="Kaur A."/>
            <person name="Locke D.P."/>
            <person name="Madan A."/>
            <person name="Munson G."/>
            <person name="Jaffe D.B."/>
            <person name="Lui A."/>
            <person name="Macdonald P."/>
            <person name="Mauceli E."/>
            <person name="Naylor J.W."/>
            <person name="Nesbitt R."/>
            <person name="Nicol R."/>
            <person name="O'Leary S.B."/>
            <person name="Ratcliffe A."/>
            <person name="Rounsley S."/>
            <person name="She X."/>
            <person name="Sneddon K.M.B."/>
            <person name="Stewart S."/>
            <person name="Sougnez C."/>
            <person name="Stone S.M."/>
            <person name="Topham K."/>
            <person name="Vincent D."/>
            <person name="Wang S."/>
            <person name="Zimmer A.R."/>
            <person name="Birren B.W."/>
            <person name="Hood L."/>
            <person name="Lander E.S."/>
            <person name="Nusbaum C."/>
        </authorList>
    </citation>
    <scope>NUCLEOTIDE SEQUENCE [LARGE SCALE GENOMIC DNA]</scope>
</reference>
<reference key="4">
    <citation type="journal article" date="2004" name="Genome Res.">
        <title>The status, quality, and expansion of the NIH full-length cDNA project: the Mammalian Gene Collection (MGC).</title>
        <authorList>
            <consortium name="The MGC Project Team"/>
        </authorList>
    </citation>
    <scope>NUCLEOTIDE SEQUENCE [LARGE SCALE MRNA] (ISOFORMS 1 AND 2)</scope>
    <source>
        <tissue>Brain</tissue>
        <tissue>Colon</tissue>
        <tissue>Lung</tissue>
    </source>
</reference>
<reference key="5">
    <citation type="journal article" date="1999" name="Curr. Biol.">
        <title>Identification of a family of human F-box proteins.</title>
        <authorList>
            <person name="Cenciarelli C."/>
            <person name="Chiaur D.S."/>
            <person name="Guardavaccaro D."/>
            <person name="Parks W."/>
            <person name="Vidal M."/>
            <person name="Pagano M."/>
        </authorList>
    </citation>
    <scope>NUCLEOTIDE SEQUENCE [GENOMIC DNA] OF 1-82</scope>
</reference>
<reference key="6">
    <citation type="journal article" date="2009" name="Anal. Chem.">
        <title>Lys-N and trypsin cover complementary parts of the phosphoproteome in a refined SCX-based approach.</title>
        <authorList>
            <person name="Gauci S."/>
            <person name="Helbig A.O."/>
            <person name="Slijper M."/>
            <person name="Krijgsveld J."/>
            <person name="Heck A.J."/>
            <person name="Mohammed S."/>
        </authorList>
    </citation>
    <scope>ACETYLATION [LARGE SCALE ANALYSIS] AT MET-1</scope>
    <scope>IDENTIFICATION BY MASS SPECTROMETRY [LARGE SCALE ANALYSIS]</scope>
</reference>
<reference key="7">
    <citation type="journal article" date="2009" name="Science">
        <title>Lysine acetylation targets protein complexes and co-regulates major cellular functions.</title>
        <authorList>
            <person name="Choudhary C."/>
            <person name="Kumar C."/>
            <person name="Gnad F."/>
            <person name="Nielsen M.L."/>
            <person name="Rehman M."/>
            <person name="Walther T.C."/>
            <person name="Olsen J.V."/>
            <person name="Mann M."/>
        </authorList>
    </citation>
    <scope>ACETYLATION [LARGE SCALE ANALYSIS] AT LYS-194</scope>
    <scope>IDENTIFICATION BY MASS SPECTROMETRY [LARGE SCALE ANALYSIS]</scope>
</reference>
<reference key="8">
    <citation type="journal article" date="2011" name="BMC Syst. Biol.">
        <title>Initial characterization of the human central proteome.</title>
        <authorList>
            <person name="Burkard T.R."/>
            <person name="Planyavsky M."/>
            <person name="Kaupe I."/>
            <person name="Breitwieser F.P."/>
            <person name="Buerckstuemmer T."/>
            <person name="Bennett K.L."/>
            <person name="Superti-Furga G."/>
            <person name="Colinge J."/>
        </authorList>
    </citation>
    <scope>IDENTIFICATION BY MASS SPECTROMETRY [LARGE SCALE ANALYSIS]</scope>
</reference>
<reference key="9">
    <citation type="journal article" date="2011" name="Mol. Cell. Biol.">
        <title>SCF(FBXO22) regulates histone H3 lysine 9 and 36 methylation levels by targeting histone demethylase KDM4A for ubiquitin-mediated proteasomal degradation.</title>
        <authorList>
            <person name="Tan M.K."/>
            <person name="Lim H.J."/>
            <person name="Harper J.W."/>
        </authorList>
    </citation>
    <scope>FUNCTION</scope>
    <scope>INTERACTION WITH KDM4A; CUL1 AND SKP1</scope>
</reference>
<reference key="10">
    <citation type="journal article" date="2012" name="Circ. Res.">
        <title>F-box and leucine-rich repeat protein 22 is a cardiac-enriched F-box protein that regulates sarcomeric protein turnover and is essential for maintenance of contractile function in vivo.</title>
        <authorList>
            <person name="Spaich S."/>
            <person name="Will R.D."/>
            <person name="Just S."/>
            <person name="Spaich S."/>
            <person name="Kuhn C."/>
            <person name="Frank D."/>
            <person name="Berger I.M."/>
            <person name="Wiemann S."/>
            <person name="Korn B."/>
            <person name="Koegl M."/>
            <person name="Backs J."/>
            <person name="Katus H.A."/>
            <person name="Rottbauer W."/>
            <person name="Frey N."/>
        </authorList>
    </citation>
    <scope>FUNCTION</scope>
    <scope>TISSUE SPECIFICITY</scope>
    <scope>INTERACTION WITH SKP1 AND CUL1</scope>
</reference>
<reference key="11">
    <citation type="journal article" date="2012" name="Mol. Cell. Proteomics">
        <title>Comparative large-scale characterisation of plant vs. mammal proteins reveals similar and idiosyncratic N-alpha acetylation features.</title>
        <authorList>
            <person name="Bienvenut W.V."/>
            <person name="Sumpton D."/>
            <person name="Martinez A."/>
            <person name="Lilla S."/>
            <person name="Espagne C."/>
            <person name="Meinnel T."/>
            <person name="Giglione C."/>
        </authorList>
    </citation>
    <scope>ACETYLATION [LARGE SCALE ANALYSIS] AT MET-1</scope>
    <scope>IDENTIFICATION BY MASS SPECTROMETRY [LARGE SCALE ANALYSIS]</scope>
</reference>
<reference key="12">
    <citation type="journal article" date="2012" name="Proc. Natl. Acad. Sci. U.S.A.">
        <title>N-terminal acetylome analyses and functional insights of the N-terminal acetyltransferase NatB.</title>
        <authorList>
            <person name="Van Damme P."/>
            <person name="Lasa M."/>
            <person name="Polevoda B."/>
            <person name="Gazquez C."/>
            <person name="Elosegui-Artola A."/>
            <person name="Kim D.S."/>
            <person name="De Juan-Pardo E."/>
            <person name="Demeyer K."/>
            <person name="Hole K."/>
            <person name="Larrea E."/>
            <person name="Timmerman E."/>
            <person name="Prieto J."/>
            <person name="Arnesen T."/>
            <person name="Sherman F."/>
            <person name="Gevaert K."/>
            <person name="Aldabe R."/>
        </authorList>
    </citation>
    <scope>ACETYLATION [LARGE SCALE ANALYSIS] AT MET-1</scope>
    <scope>IDENTIFICATION BY MASS SPECTROMETRY [LARGE SCALE ANALYSIS]</scope>
</reference>
<reference key="13">
    <citation type="journal article" date="2013" name="J. Proteome Res.">
        <title>Toward a comprehensive characterization of a human cancer cell phosphoproteome.</title>
        <authorList>
            <person name="Zhou H."/>
            <person name="Di Palma S."/>
            <person name="Preisinger C."/>
            <person name="Peng M."/>
            <person name="Polat A.N."/>
            <person name="Heck A.J."/>
            <person name="Mohammed S."/>
        </authorList>
    </citation>
    <scope>PHOSPHORYLATION [LARGE SCALE ANALYSIS] AT SER-128</scope>
    <scope>IDENTIFICATION BY MASS SPECTROMETRY [LARGE SCALE ANALYSIS]</scope>
    <source>
        <tissue>Cervix carcinoma</tissue>
    </source>
</reference>
<reference key="14">
    <citation type="journal article" date="2016" name="Nat. Commun.">
        <title>SCF(Fbxo22)-KDM4A targets methylated p53 for degradation and regulates senescence.</title>
        <authorList>
            <person name="Johmura Y."/>
            <person name="Sun J."/>
            <person name="Kitagawa K."/>
            <person name="Nakanishi K."/>
            <person name="Kuno T."/>
            <person name="Naiki-Ito A."/>
            <person name="Sawada Y."/>
            <person name="Miyamoto T."/>
            <person name="Okabe A."/>
            <person name="Aburatani H."/>
            <person name="Li S."/>
            <person name="Miyoshi I."/>
            <person name="Takahashi S."/>
            <person name="Kitagawa M."/>
            <person name="Nakanishi M."/>
        </authorList>
    </citation>
    <scope>FUNCTION</scope>
    <scope>INTERACTION WITH TP53</scope>
</reference>
<reference key="15">
    <citation type="journal article" date="2023" name="Cell Metab.">
        <title>The tRNA-GCN2-FBXO22-axis-mediated mTOR ubiquitination senses amino acid insufficiency.</title>
        <authorList>
            <person name="Ge M.K."/>
            <person name="Zhang C."/>
            <person name="Zhang N."/>
            <person name="He P."/>
            <person name="Cai H.Y."/>
            <person name="Li S."/>
            <person name="Wu S."/>
            <person name="Chu X.L."/>
            <person name="Zhang Y.X."/>
            <person name="Ma H.M."/>
            <person name="Xia L."/>
            <person name="Yang S."/>
            <person name="Yu J.X."/>
            <person name="Yao S.Y."/>
            <person name="Zhou X.L."/>
            <person name="Su B."/>
            <person name="Chen G.Q."/>
            <person name="Shen S.M."/>
        </authorList>
    </citation>
    <scope>FUNCTION</scope>
    <scope>PHOSPHORYLATION AT THR-127</scope>
    <scope>INTERACTION WITH MTOR</scope>
    <scope>SUBCELLULAR LOCATION</scope>
    <scope>MUTAGENESIS OF THR-127</scope>
</reference>
<reference key="16">
    <citation type="journal article" date="2024" name="J. Med. Virol.">
        <title>E3 ubiquitin ligase FBXO22 inhibits SARS-CoV-2 replication via promoting proteasome-dependent degradation of NSP5.</title>
        <authorList>
            <person name="Zhou Y."/>
            <person name="Feng W."/>
            <person name="Yang C."/>
            <person name="Wei X."/>
            <person name="Fan L."/>
            <person name="Wu Y."/>
            <person name="Gao X."/>
            <person name="Shen X."/>
            <person name="Zhang Z."/>
            <person name="Zhao J."/>
        </authorList>
    </citation>
    <scope>FUNCTION</scope>
    <scope>INTERACTION WITH SARS-COV-2 3C-LIKE PROTEINASE NSP5 (MICROBIAL INFECTION)</scope>
    <scope>SUBCELLULAR LOCATION</scope>
</reference>
<reference key="17">
    <citation type="journal article" date="2024" name="Cell">
        <title>Recognition of BACH1 quaternary structure degrons by two F-box proteins under oxidative stress.</title>
        <authorList>
            <person name="Cao S."/>
            <person name="Garcia S.F."/>
            <person name="Shi H."/>
            <person name="James E.I."/>
            <person name="Kito Y."/>
            <person name="Shi H."/>
            <person name="Mao H."/>
            <person name="Kaisari S."/>
            <person name="Rona G."/>
            <person name="Deng S."/>
            <person name="Goldberg H.V."/>
            <person name="Ponce J."/>
            <person name="Ueberheide B."/>
            <person name="Lignitto L."/>
            <person name="Guttman M."/>
            <person name="Pagano M."/>
            <person name="Zheng N."/>
        </authorList>
    </citation>
    <scope>FUNCTION</scope>
    <scope>INTERACTION WITH BACH1</scope>
</reference>
<sequence length="403" mass="44508">MEPVGCCGECRGSSVDPRSTFVLSNLAEVVERVLTFLPAKALLRVACVCRLWRECVRRVLRTHRSVTWISAGLAEAGHLEGHCLVRVVAEELENVRILPHTVLYMADSETFISLEECRGHKRARKRTSMETALALEKLFPKQCQVLGIVTPGIVVTPMGSGSNRPQEIEIGESGFALLFPQIEGIKIQPFHFIKDPKNLTLERHQLTEVGLLDNPELRVVLVFGYNCCKVGASNYLQQVVSTFSDMNIILAGGQVDNLSSLTSEKNPLDIDASGVVGLSFSGHRIQSATVLLNEDVSDEKTAEAAMQRLKAANIPEHNTIGFMFACVGRGFQYYRAKGNVEADAFRKFFPSVPLFGFFGNGEIGCDRIVTGNFILRKCNEVKDDDLFHSYTTIMALIHLGSSK</sequence>
<feature type="chain" id="PRO_0000119906" description="F-box only protein 22">
    <location>
        <begin position="1"/>
        <end position="403"/>
    </location>
</feature>
<feature type="domain" description="F-box">
    <location>
        <begin position="21"/>
        <end position="67"/>
    </location>
</feature>
<feature type="modified residue" description="N-acetylmethionine" evidence="11 13 14">
    <location>
        <position position="1"/>
    </location>
</feature>
<feature type="modified residue" description="Phosphothreonine" evidence="5">
    <location>
        <position position="127"/>
    </location>
</feature>
<feature type="modified residue" description="Phosphoserine" evidence="15">
    <location>
        <position position="128"/>
    </location>
</feature>
<feature type="modified residue" description="N6-acetyllysine" evidence="12">
    <location>
        <position position="194"/>
    </location>
</feature>
<feature type="splice variant" id="VSP_041821" description="In isoform 2." evidence="9">
    <location>
        <begin position="47"/>
        <end position="403"/>
    </location>
</feature>
<feature type="splice variant" id="VSP_013058" description="In isoform 3." evidence="8">
    <original>NPLDIDASGVV</original>
    <variation>YVLCASDFVCE</variation>
    <location>
        <begin position="266"/>
        <end position="276"/>
    </location>
</feature>
<feature type="splice variant" id="VSP_013059" description="In isoform 3." evidence="8">
    <location>
        <begin position="277"/>
        <end position="403"/>
    </location>
</feature>
<feature type="mutagenesis site" description="Loss of EIF2AK4-induced cytoplasmic retention of FBXO22." evidence="5">
    <original>T</original>
    <variation>A</variation>
    <location>
        <position position="127"/>
    </location>
</feature>
<feature type="sequence conflict" description="In Ref. 5; AAF04523." evidence="10" ref="5">
    <original>VGCCGECR</original>
    <variation>AGACGGP</variation>
    <location>
        <begin position="4"/>
        <end position="11"/>
    </location>
</feature>
<feature type="sequence conflict" description="In Ref. 4; AAH32540." evidence="10" ref="4">
    <original>F</original>
    <variation>L</variation>
    <location>
        <position position="349"/>
    </location>
</feature>
<proteinExistence type="evidence at protein level"/>
<organism>
    <name type="scientific">Homo sapiens</name>
    <name type="common">Human</name>
    <dbReference type="NCBI Taxonomy" id="9606"/>
    <lineage>
        <taxon>Eukaryota</taxon>
        <taxon>Metazoa</taxon>
        <taxon>Chordata</taxon>
        <taxon>Craniata</taxon>
        <taxon>Vertebrata</taxon>
        <taxon>Euteleostomi</taxon>
        <taxon>Mammalia</taxon>
        <taxon>Eutheria</taxon>
        <taxon>Euarchontoglires</taxon>
        <taxon>Primates</taxon>
        <taxon>Haplorrhini</taxon>
        <taxon>Catarrhini</taxon>
        <taxon>Hominidae</taxon>
        <taxon>Homo</taxon>
    </lineage>
</organism>